<comment type="function">
    <text evidence="1 2 3">Non-catalytic component of the MSL histone acetyltransferase complex, a multiprotein complex that mediates the majority of histone H4 acetylation at 'Lys-16' (H4K16ac), an epigenetic mark that prevents chromatin compaction. The MSL complex is required for chromosome stability and genome integrity by maintaining homeostatic levels of H4K16ac (By similarity). The MSL complex is also involved in gene dosage by promoting up-regulation of genes expressed by the X chromosome. X up-regulation is required to compensate for autosomal biallelic expression (By similarity). The MSL complex also participates in gene dosage compensation by promoting expression of Tsix non-coding RNA (By similarity). Acts as a histone reader that specifically recognizes and binds histone H4 monomethylated at 'Lys-20' (H4K20Me1) in a DNA-dependent manner and is proposed to be involved in chromosomal targeting of the MSL complex. May play a role X inactivation in females (By similarity).</text>
</comment>
<comment type="subunit">
    <text evidence="1">Component of the MSL histone acetyltransferase complex at least composed of the KAT8/MOF, MSL1/hampin, MSL2 and MSL3. Interacts (via the MRG domain) with MSL1 and KAT8/MOF.</text>
</comment>
<comment type="subcellular location">
    <subcellularLocation>
        <location evidence="1">Nucleus</location>
    </subcellularLocation>
</comment>
<sequence length="521" mass="59810">MSASEGMKFKFHSGEKVLCFEPDPTKARVLYDAKIVDVIVGKDEKGRKIPEYLIHFNGWNRSWDRWAAEDHVLRDTDENRRLQRKLARKAVARLRSTGRKKKRCRLPGVDSVLKGLPTEEKDENDENSLSSSSDCSENKDEEISEESDIEEKTEVKEEPELQTRREMEERTITIEIPEVLKKQLEDDCYYINRRKRLVKLPCQTNIITILESYVKHFAINAAFSANERPRHHHVMPHANMNVHYIPAEKNVDLCKEMVDGLRITFDYTLPLVLLYPYEQAQYKKVTSSKFFLPIKESATSTNRSQEELSPSPPLLNPSTPQSTESQPTTGEPATPKRRKAEPEALQSLRRSTRHSANCDRLSESSASPQPKRRQQDTSGSMPKLFLHLEKKTPVHSRSSSPIPLTPSKEGSAVFAGFEGRRTNEINEVLSWKLVPDNYPPGDQPPPPSYIYGAQHLLRLFVKLPEILGKMSFSEKNLKALLKHFDLFLRFLAEYHDDFFPESAYVAACEAHYSTKNPRAIY</sequence>
<evidence type="ECO:0000250" key="1">
    <source>
        <dbReference type="UniProtKB" id="Q8N5Y2"/>
    </source>
</evidence>
<evidence type="ECO:0000250" key="2">
    <source>
        <dbReference type="UniProtKB" id="Q9D1P2"/>
    </source>
</evidence>
<evidence type="ECO:0000250" key="3">
    <source>
        <dbReference type="UniProtKB" id="Q9WVG9"/>
    </source>
</evidence>
<evidence type="ECO:0000255" key="4"/>
<evidence type="ECO:0000255" key="5">
    <source>
        <dbReference type="PROSITE-ProRule" id="PRU00972"/>
    </source>
</evidence>
<evidence type="ECO:0000256" key="6">
    <source>
        <dbReference type="SAM" id="MobiDB-lite"/>
    </source>
</evidence>
<dbReference type="EMBL" id="CR860334">
    <property type="protein sequence ID" value="CAH92471.1"/>
    <property type="molecule type" value="mRNA"/>
</dbReference>
<dbReference type="RefSeq" id="NP_001126456.1">
    <property type="nucleotide sequence ID" value="NM_001132984.2"/>
</dbReference>
<dbReference type="SMR" id="Q5R6Y9"/>
<dbReference type="FunCoup" id="Q5R6Y9">
    <property type="interactions" value="2257"/>
</dbReference>
<dbReference type="STRING" id="9601.ENSPPYP00000022509"/>
<dbReference type="Ensembl" id="ENSPPYT00000023467.3">
    <property type="protein sequence ID" value="ENSPPYP00000022509.2"/>
    <property type="gene ID" value="ENSPPYG00000020123.3"/>
</dbReference>
<dbReference type="GeneID" id="100173442"/>
<dbReference type="KEGG" id="pon:100173442"/>
<dbReference type="CTD" id="10943"/>
<dbReference type="eggNOG" id="KOG3001">
    <property type="taxonomic scope" value="Eukaryota"/>
</dbReference>
<dbReference type="GeneTree" id="ENSGT00950000182965"/>
<dbReference type="HOGENOM" id="CLU_039566_5_2_1"/>
<dbReference type="InParanoid" id="Q5R6Y9"/>
<dbReference type="OMA" id="DTEYAHL"/>
<dbReference type="OrthoDB" id="10044771at2759"/>
<dbReference type="TreeFam" id="TF323400"/>
<dbReference type="Proteomes" id="UP000001595">
    <property type="component" value="Chromosome X"/>
</dbReference>
<dbReference type="GO" id="GO:0072487">
    <property type="term" value="C:MSL complex"/>
    <property type="evidence" value="ECO:0000250"/>
    <property type="project" value="UniProtKB"/>
</dbReference>
<dbReference type="GO" id="GO:0035267">
    <property type="term" value="C:NuA4 histone acetyltransferase complex"/>
    <property type="evidence" value="ECO:0007669"/>
    <property type="project" value="TreeGrafter"/>
</dbReference>
<dbReference type="GO" id="GO:0005634">
    <property type="term" value="C:nucleus"/>
    <property type="evidence" value="ECO:0000250"/>
    <property type="project" value="UniProtKB"/>
</dbReference>
<dbReference type="GO" id="GO:0003677">
    <property type="term" value="F:DNA binding"/>
    <property type="evidence" value="ECO:0000250"/>
    <property type="project" value="UniProtKB"/>
</dbReference>
<dbReference type="GO" id="GO:0140046">
    <property type="term" value="F:histone H4K16ac reader activity"/>
    <property type="evidence" value="ECO:0000250"/>
    <property type="project" value="UniProtKB"/>
</dbReference>
<dbReference type="GO" id="GO:0045893">
    <property type="term" value="P:positive regulation of DNA-templated transcription"/>
    <property type="evidence" value="ECO:0007669"/>
    <property type="project" value="Ensembl"/>
</dbReference>
<dbReference type="GO" id="GO:0006355">
    <property type="term" value="P:regulation of DNA-templated transcription"/>
    <property type="evidence" value="ECO:0000250"/>
    <property type="project" value="UniProtKB"/>
</dbReference>
<dbReference type="CDD" id="cd18983">
    <property type="entry name" value="CBD_MSL3_like"/>
    <property type="match status" value="1"/>
</dbReference>
<dbReference type="FunFam" id="1.10.274.30:FF:000003">
    <property type="entry name" value="Male-specific lethal 3 homolog"/>
    <property type="match status" value="1"/>
</dbReference>
<dbReference type="FunFam" id="1.10.274.30:FF:000002">
    <property type="entry name" value="male-specific lethal 3 homolog"/>
    <property type="match status" value="1"/>
</dbReference>
<dbReference type="FunFam" id="2.30.30.140:FF:000042">
    <property type="entry name" value="male-specific lethal 3 homolog"/>
    <property type="match status" value="1"/>
</dbReference>
<dbReference type="Gene3D" id="2.30.30.140">
    <property type="match status" value="1"/>
</dbReference>
<dbReference type="Gene3D" id="1.10.274.30">
    <property type="entry name" value="MRG domain"/>
    <property type="match status" value="2"/>
</dbReference>
<dbReference type="InterPro" id="IPR016197">
    <property type="entry name" value="Chromo-like_dom_sf"/>
</dbReference>
<dbReference type="InterPro" id="IPR000953">
    <property type="entry name" value="Chromo/chromo_shadow_dom"/>
</dbReference>
<dbReference type="InterPro" id="IPR008676">
    <property type="entry name" value="MRG"/>
</dbReference>
<dbReference type="InterPro" id="IPR038217">
    <property type="entry name" value="MRG_C_sf"/>
</dbReference>
<dbReference type="InterPro" id="IPR026541">
    <property type="entry name" value="MRG_dom"/>
</dbReference>
<dbReference type="InterPro" id="IPR053820">
    <property type="entry name" value="MSL3_chromo-like"/>
</dbReference>
<dbReference type="PANTHER" id="PTHR10880">
    <property type="entry name" value="MORTALITY FACTOR 4-LIKE PROTEIN"/>
    <property type="match status" value="1"/>
</dbReference>
<dbReference type="PANTHER" id="PTHR10880:SF15">
    <property type="entry name" value="MSL COMPLEX SUBUNIT 3"/>
    <property type="match status" value="1"/>
</dbReference>
<dbReference type="Pfam" id="PF05712">
    <property type="entry name" value="MRG"/>
    <property type="match status" value="1"/>
</dbReference>
<dbReference type="Pfam" id="PF22732">
    <property type="entry name" value="MSL3_chromo-like"/>
    <property type="match status" value="1"/>
</dbReference>
<dbReference type="SMART" id="SM00298">
    <property type="entry name" value="CHROMO"/>
    <property type="match status" value="1"/>
</dbReference>
<dbReference type="SUPFAM" id="SSF54160">
    <property type="entry name" value="Chromo domain-like"/>
    <property type="match status" value="1"/>
</dbReference>
<dbReference type="PROSITE" id="PS51640">
    <property type="entry name" value="MRG"/>
    <property type="match status" value="1"/>
</dbReference>
<name>MS3L1_PONAB</name>
<reference key="1">
    <citation type="submission" date="2004-11" db="EMBL/GenBank/DDBJ databases">
        <authorList>
            <consortium name="The German cDNA consortium"/>
        </authorList>
    </citation>
    <scope>NUCLEOTIDE SEQUENCE [LARGE SCALE MRNA]</scope>
    <source>
        <tissue>Brain cortex</tissue>
    </source>
</reference>
<organism>
    <name type="scientific">Pongo abelii</name>
    <name type="common">Sumatran orangutan</name>
    <name type="synonym">Pongo pygmaeus abelii</name>
    <dbReference type="NCBI Taxonomy" id="9601"/>
    <lineage>
        <taxon>Eukaryota</taxon>
        <taxon>Metazoa</taxon>
        <taxon>Chordata</taxon>
        <taxon>Craniata</taxon>
        <taxon>Vertebrata</taxon>
        <taxon>Euteleostomi</taxon>
        <taxon>Mammalia</taxon>
        <taxon>Eutheria</taxon>
        <taxon>Euarchontoglires</taxon>
        <taxon>Primates</taxon>
        <taxon>Haplorrhini</taxon>
        <taxon>Catarrhini</taxon>
        <taxon>Hominidae</taxon>
        <taxon>Pongo</taxon>
    </lineage>
</organism>
<feature type="chain" id="PRO_0000314289" description="MSL complex subunit 3">
    <location>
        <begin position="1"/>
        <end position="521"/>
    </location>
</feature>
<feature type="domain" description="Tudor-knot" evidence="4">
    <location>
        <begin position="13"/>
        <end position="71"/>
    </location>
</feature>
<feature type="domain" description="MRG" evidence="5">
    <location>
        <begin position="168"/>
        <end position="517"/>
    </location>
</feature>
<feature type="region of interest" description="Disordered" evidence="6">
    <location>
        <begin position="114"/>
        <end position="166"/>
    </location>
</feature>
<feature type="region of interest" description="Required for the histone acetyltransferase activity of the MSL complex" evidence="1">
    <location>
        <begin position="290"/>
        <end position="440"/>
    </location>
</feature>
<feature type="region of interest" description="Disordered" evidence="6">
    <location>
        <begin position="298"/>
        <end position="380"/>
    </location>
</feature>
<feature type="region of interest" description="Disordered" evidence="6">
    <location>
        <begin position="390"/>
        <end position="409"/>
    </location>
</feature>
<feature type="compositionally biased region" description="Acidic residues" evidence="6">
    <location>
        <begin position="139"/>
        <end position="149"/>
    </location>
</feature>
<feature type="compositionally biased region" description="Basic and acidic residues" evidence="6">
    <location>
        <begin position="150"/>
        <end position="166"/>
    </location>
</feature>
<feature type="compositionally biased region" description="Low complexity" evidence="6">
    <location>
        <begin position="316"/>
        <end position="329"/>
    </location>
</feature>
<feature type="modified residue" description="Phosphoserine" evidence="3">
    <location>
        <position position="309"/>
    </location>
</feature>
<feature type="modified residue" description="Phosphoserine" evidence="1">
    <location>
        <position position="311"/>
    </location>
</feature>
<feature type="modified residue" description="Phosphoserine" evidence="1">
    <location>
        <position position="367"/>
    </location>
</feature>
<feature type="modified residue" description="Phosphoserine" evidence="1">
    <location>
        <position position="400"/>
    </location>
</feature>
<feature type="modified residue" description="Phosphothreonine" evidence="1">
    <location>
        <position position="405"/>
    </location>
</feature>
<feature type="modified residue" description="Phosphoserine" evidence="1">
    <location>
        <position position="407"/>
    </location>
</feature>
<feature type="modified residue" description="Phosphoserine" evidence="1">
    <location>
        <position position="411"/>
    </location>
</feature>
<gene>
    <name type="primary">MSL3</name>
    <name type="synonym">MSL3L1</name>
</gene>
<protein>
    <recommendedName>
        <fullName>MSL complex subunit 3</fullName>
    </recommendedName>
    <alternativeName>
        <fullName>Male-specific lethal 3 homolog</fullName>
    </alternativeName>
    <alternativeName>
        <fullName>Male-specific lethal-3 homolog 1</fullName>
    </alternativeName>
    <alternativeName>
        <fullName>Male-specific lethal-3 protein-like 1</fullName>
        <shortName>MSL3-like 1</shortName>
    </alternativeName>
</protein>
<proteinExistence type="evidence at transcript level"/>
<keyword id="KW-0156">Chromatin regulator</keyword>
<keyword id="KW-0238">DNA-binding</keyword>
<keyword id="KW-0539">Nucleus</keyword>
<keyword id="KW-0597">Phosphoprotein</keyword>
<keyword id="KW-1185">Reference proteome</keyword>
<keyword id="KW-0804">Transcription</keyword>
<keyword id="KW-0805">Transcription regulation</keyword>
<accession>Q5R6Y9</accession>